<keyword id="KW-0067">ATP-binding</keyword>
<keyword id="KW-0143">Chaperone</keyword>
<keyword id="KW-0963">Cytoplasm</keyword>
<keyword id="KW-0547">Nucleotide-binding</keyword>
<keyword id="KW-0614">Plasmid</keyword>
<keyword id="KW-1185">Reference proteome</keyword>
<keyword id="KW-0346">Stress response</keyword>
<dbReference type="EMBL" id="CP000138">
    <property type="protein sequence ID" value="ABC94014.1"/>
    <property type="molecule type" value="Genomic_DNA"/>
</dbReference>
<dbReference type="RefSeq" id="WP_011428431.1">
    <property type="nucleotide sequence ID" value="NC_007766.1"/>
</dbReference>
<dbReference type="SMR" id="Q2JZH2"/>
<dbReference type="KEGG" id="ret:RHE_PF00122"/>
<dbReference type="HOGENOM" id="CLU_006684_3_0_5"/>
<dbReference type="OrthoDB" id="9802640at2"/>
<dbReference type="Proteomes" id="UP000001936">
    <property type="component" value="Plasmid p42f"/>
</dbReference>
<dbReference type="GO" id="GO:0005737">
    <property type="term" value="C:cytoplasm"/>
    <property type="evidence" value="ECO:0007669"/>
    <property type="project" value="UniProtKB-SubCell"/>
</dbReference>
<dbReference type="GO" id="GO:0005524">
    <property type="term" value="F:ATP binding"/>
    <property type="evidence" value="ECO:0007669"/>
    <property type="project" value="UniProtKB-UniRule"/>
</dbReference>
<dbReference type="GO" id="GO:0016887">
    <property type="term" value="F:ATP hydrolysis activity"/>
    <property type="evidence" value="ECO:0007669"/>
    <property type="project" value="InterPro"/>
</dbReference>
<dbReference type="GO" id="GO:0140662">
    <property type="term" value="F:ATP-dependent protein folding chaperone"/>
    <property type="evidence" value="ECO:0007669"/>
    <property type="project" value="InterPro"/>
</dbReference>
<dbReference type="GO" id="GO:0051082">
    <property type="term" value="F:unfolded protein binding"/>
    <property type="evidence" value="ECO:0007669"/>
    <property type="project" value="UniProtKB-UniRule"/>
</dbReference>
<dbReference type="CDD" id="cd16927">
    <property type="entry name" value="HATPase_Hsp90-like"/>
    <property type="match status" value="1"/>
</dbReference>
<dbReference type="Gene3D" id="3.30.230.80">
    <property type="match status" value="1"/>
</dbReference>
<dbReference type="Gene3D" id="3.40.50.11260">
    <property type="match status" value="1"/>
</dbReference>
<dbReference type="Gene3D" id="1.20.120.790">
    <property type="entry name" value="Heat shock protein 90, C-terminal domain"/>
    <property type="match status" value="1"/>
</dbReference>
<dbReference type="Gene3D" id="3.30.565.10">
    <property type="entry name" value="Histidine kinase-like ATPase, C-terminal domain"/>
    <property type="match status" value="1"/>
</dbReference>
<dbReference type="HAMAP" id="MF_00505">
    <property type="entry name" value="HSP90"/>
    <property type="match status" value="1"/>
</dbReference>
<dbReference type="InterPro" id="IPR036890">
    <property type="entry name" value="HATPase_C_sf"/>
</dbReference>
<dbReference type="InterPro" id="IPR037196">
    <property type="entry name" value="HSP90_C"/>
</dbReference>
<dbReference type="InterPro" id="IPR001404">
    <property type="entry name" value="Hsp90_fam"/>
</dbReference>
<dbReference type="InterPro" id="IPR020575">
    <property type="entry name" value="Hsp90_N"/>
</dbReference>
<dbReference type="InterPro" id="IPR020568">
    <property type="entry name" value="Ribosomal_Su5_D2-typ_SF"/>
</dbReference>
<dbReference type="NCBIfam" id="NF003555">
    <property type="entry name" value="PRK05218.1"/>
    <property type="match status" value="1"/>
</dbReference>
<dbReference type="PANTHER" id="PTHR11528">
    <property type="entry name" value="HEAT SHOCK PROTEIN 90 FAMILY MEMBER"/>
    <property type="match status" value="1"/>
</dbReference>
<dbReference type="Pfam" id="PF13589">
    <property type="entry name" value="HATPase_c_3"/>
    <property type="match status" value="1"/>
</dbReference>
<dbReference type="Pfam" id="PF00183">
    <property type="entry name" value="HSP90"/>
    <property type="match status" value="1"/>
</dbReference>
<dbReference type="PIRSF" id="PIRSF002583">
    <property type="entry name" value="Hsp90"/>
    <property type="match status" value="1"/>
</dbReference>
<dbReference type="PRINTS" id="PR00775">
    <property type="entry name" value="HEATSHOCK90"/>
</dbReference>
<dbReference type="SUPFAM" id="SSF55874">
    <property type="entry name" value="ATPase domain of HSP90 chaperone/DNA topoisomerase II/histidine kinase"/>
    <property type="match status" value="1"/>
</dbReference>
<dbReference type="SUPFAM" id="SSF110942">
    <property type="entry name" value="HSP90 C-terminal domain"/>
    <property type="match status" value="1"/>
</dbReference>
<dbReference type="SUPFAM" id="SSF54211">
    <property type="entry name" value="Ribosomal protein S5 domain 2-like"/>
    <property type="match status" value="1"/>
</dbReference>
<comment type="function">
    <text evidence="1">Molecular chaperone. Has ATPase activity.</text>
</comment>
<comment type="subunit">
    <text evidence="1">Homodimer.</text>
</comment>
<comment type="subcellular location">
    <subcellularLocation>
        <location evidence="1">Cytoplasm</location>
    </subcellularLocation>
</comment>
<comment type="similarity">
    <text evidence="1">Belongs to the heat shock protein 90 family.</text>
</comment>
<sequence length="630" mass="70274">MTTTVEQTAESHVFEADVARLLHMMVHSVYSDKGVFLRELISNGADACEKLRYEAIETPSLLAADAESRIMLRLDEESRQLVVEDNGIGMRRDEMIEALGTIARSGTRAFMERIAENKAAEGAQFIGQFGVGFYSCFMVAEHVDVISRRAGSEEAWKWSSDGKGSYSVEAANLVEAPARGTRIVLHLMEDAKTYTSRWTVERIVKEQSGHVPVAIRIVDKPGGEPVQITDGTALWTKSKSEVSKEDYTDFYRGLSGQYDEPALTVHFRAEGRHEYTALAFVPGTQPFDMFDPERKGRMKLYVKRVFITDDAELMPRYLRFVRGLIDTADLPLNVSREMIQESPILAAIRKGVTNRVITAIEKLADGESETYLTFWKNFGPVLKEGIYEDYERRAQLMALARFHTSASPEGHRSLAEYVKDAKEGQDAIYYLAGGSLDQLKASPQLEGFRARGIEVLLLTDSVDSFWVVNAPEFEGKAFKSITQGTADLAQFPRLDNQTPPEQDSAGLATFIGFAREKLAGQVADVRASDRLTESAVCLVAPEDGYDRQMEKILQNAGRLQGATKPILEINLAHPVIKAIAAVEDDASYQEDATFLLLDQARILDGERPQDPRKFAQRLARVFERSVRSEG</sequence>
<gene>
    <name evidence="1" type="primary">htpG</name>
    <name type="ordered locus">RHE_PF00122</name>
</gene>
<name>HTPG_RHIEC</name>
<feature type="chain" id="PRO_0000258520" description="Chaperone protein HtpG">
    <location>
        <begin position="1"/>
        <end position="630"/>
    </location>
</feature>
<feature type="region of interest" description="A; substrate-binding" evidence="1">
    <location>
        <begin position="1"/>
        <end position="336"/>
    </location>
</feature>
<feature type="region of interest" description="B" evidence="1">
    <location>
        <begin position="337"/>
        <end position="551"/>
    </location>
</feature>
<feature type="region of interest" description="C" evidence="1">
    <location>
        <begin position="552"/>
        <end position="630"/>
    </location>
</feature>
<proteinExistence type="inferred from homology"/>
<protein>
    <recommendedName>
        <fullName evidence="1">Chaperone protein HtpG</fullName>
    </recommendedName>
    <alternativeName>
        <fullName evidence="1">Heat shock protein HtpG</fullName>
    </alternativeName>
    <alternativeName>
        <fullName evidence="1">High temperature protein G</fullName>
    </alternativeName>
</protein>
<evidence type="ECO:0000255" key="1">
    <source>
        <dbReference type="HAMAP-Rule" id="MF_00505"/>
    </source>
</evidence>
<organism>
    <name type="scientific">Rhizobium etli (strain ATCC 51251 / DSM 11541 / JCM 21823 / NBRC 15573 / CFN 42)</name>
    <dbReference type="NCBI Taxonomy" id="347834"/>
    <lineage>
        <taxon>Bacteria</taxon>
        <taxon>Pseudomonadati</taxon>
        <taxon>Pseudomonadota</taxon>
        <taxon>Alphaproteobacteria</taxon>
        <taxon>Hyphomicrobiales</taxon>
        <taxon>Rhizobiaceae</taxon>
        <taxon>Rhizobium/Agrobacterium group</taxon>
        <taxon>Rhizobium</taxon>
    </lineage>
</organism>
<reference key="1">
    <citation type="journal article" date="2006" name="Proc. Natl. Acad. Sci. U.S.A.">
        <title>The partitioned Rhizobium etli genome: genetic and metabolic redundancy in seven interacting replicons.</title>
        <authorList>
            <person name="Gonzalez V."/>
            <person name="Santamaria R.I."/>
            <person name="Bustos P."/>
            <person name="Hernandez-Gonzalez I."/>
            <person name="Medrano-Soto A."/>
            <person name="Moreno-Hagelsieb G."/>
            <person name="Janga S.C."/>
            <person name="Ramirez M.A."/>
            <person name="Jimenez-Jacinto V."/>
            <person name="Collado-Vides J."/>
            <person name="Davila G."/>
        </authorList>
    </citation>
    <scope>NUCLEOTIDE SEQUENCE [LARGE SCALE GENOMIC DNA]</scope>
    <source>
        <strain>ATCC 51251 / DSM 11541 / JCM 21823 / NBRC 15573 / CFN 42</strain>
    </source>
</reference>
<geneLocation type="plasmid">
    <name>p42f</name>
</geneLocation>
<accession>Q2JZH2</accession>